<sequence length="765" mass="84047">MEEKYGGDVLAGPGGGGGLGPVDVPSARLTKYIVLLCFTKFLKAVGLFESYDLLKAVHIVQFIFILKLGTAFFMVLFQKPFSSGKTITKHQWIKIFKHAVAGCIISLLWFFGLTLCGPLRTLLLFEHSDIVVISLLSVLFTSSGGGPAKTRGAAFFIIAVICLLLFDNDDLMAKMAEHPEGHHDSALTHMLYTAIAFLGVADHKGGVLLLVLALCCKVGFHTASRKLSVDVGGAKRLQALSHLVSVLLLCPWVIVLSVTTESKVESWFSLIMPFATVIFFVMILDFYVDSICSVKMEVSKCARYGSFPIFISALLFGNFWTHPITDQLRAMNKAAHQESTEHVLSGGVVVSAIFFILSANILSSPSKRGQKGTLIGYSPEGTPLYNFMGDAFQHSSQSIPRFIKESLKQILEESDSRQIFYFLCLNLLFTFVELFYGVLTNSLGLISDGFHMLFDCSALVMGLFAALMSRWKATRIFSYGYGRIEILSGFINGLFLIVIAFFVFMESVARLIDPPELDTHMLTPVSVGGLIVNLIGICAFSHAHSHAHGASQGSCHSSDHSHSHHMHGHSDHGHGHSHGSAGGGMNANMRGVFLHVLADTLGSIGVIVSTVLIEQFGWFIADPLCSLFIAILIFLSVVPLIKDACQVLLLRLPPEYEKELHIALEKIQKIEGLISYRDPHFWRHSASIVAGTIHIQVTSDVLEQRIVQQVTGILKDAGVNNLTIQVEKEAYFQHMSGLSTGFHDVLAMTKQMESMKYCKDGTYIM</sequence>
<name>ZNT5_HUMAN</name>
<protein>
    <recommendedName>
        <fullName evidence="24">Proton-coupled zinc antiporter SLC30A5</fullName>
    </recommendedName>
    <alternativeName>
        <fullName evidence="28">Solute carrier family 30 member 5</fullName>
    </alternativeName>
    <alternativeName>
        <fullName evidence="19">Zinc transporter 5</fullName>
        <shortName evidence="19">ZnT-5</shortName>
    </alternativeName>
    <alternativeName>
        <fullName evidence="20">ZnT-like transporter 1</fullName>
        <shortName evidence="20">hZTL1</shortName>
    </alternativeName>
</protein>
<gene>
    <name evidence="28" type="primary">SLC30A5</name>
    <name type="synonym">ZNT5</name>
    <name type="synonym">ZNTL1</name>
    <name evidence="20" type="synonym">ZTL1</name>
    <name type="ORF">UNQ863/PRO1879</name>
</gene>
<feature type="chain" id="PRO_0000314293" description="Proton-coupled zinc antiporter SLC30A5">
    <location>
        <begin position="1"/>
        <end position="765"/>
    </location>
</feature>
<feature type="topological domain" description="Cytoplasmic" evidence="23">
    <location>
        <begin position="1"/>
        <end position="32"/>
    </location>
</feature>
<feature type="transmembrane region" description="Helical" evidence="2">
    <location>
        <begin position="33"/>
        <end position="53"/>
    </location>
</feature>
<feature type="topological domain" description="Lumenal" evidence="23">
    <location>
        <begin position="54"/>
        <end position="56"/>
    </location>
</feature>
<feature type="transmembrane region" description="Helical" evidence="2">
    <location>
        <begin position="57"/>
        <end position="77"/>
    </location>
</feature>
<feature type="topological domain" description="Cytoplasmic" evidence="23">
    <location>
        <begin position="78"/>
        <end position="98"/>
    </location>
</feature>
<feature type="transmembrane region" description="Helical" evidence="2">
    <location>
        <begin position="99"/>
        <end position="119"/>
    </location>
</feature>
<feature type="topological domain" description="Lumenal" evidence="23">
    <location>
        <position position="120"/>
    </location>
</feature>
<feature type="transmembrane region" description="Helical" evidence="2">
    <location>
        <begin position="121"/>
        <end position="141"/>
    </location>
</feature>
<feature type="topological domain" description="Cytoplasmic" evidence="23">
    <location>
        <begin position="142"/>
        <end position="152"/>
    </location>
</feature>
<feature type="transmembrane region" description="Helical" evidence="2">
    <location>
        <begin position="153"/>
        <end position="173"/>
    </location>
</feature>
<feature type="topological domain" description="Lumenal" evidence="23">
    <location>
        <begin position="174"/>
        <end position="193"/>
    </location>
</feature>
<feature type="transmembrane region" description="Helical" evidence="2">
    <location>
        <begin position="194"/>
        <end position="214"/>
    </location>
</feature>
<feature type="topological domain" description="Cytoplasmic" evidence="23">
    <location>
        <begin position="215"/>
        <end position="238"/>
    </location>
</feature>
<feature type="transmembrane region" description="Helical" evidence="2">
    <location>
        <begin position="239"/>
        <end position="259"/>
    </location>
</feature>
<feature type="topological domain" description="Lumenal" evidence="23">
    <location>
        <begin position="260"/>
        <end position="267"/>
    </location>
</feature>
<feature type="transmembrane region" description="Helical" evidence="2">
    <location>
        <begin position="268"/>
        <end position="288"/>
    </location>
</feature>
<feature type="topological domain" description="Cytoplasmic" evidence="23">
    <location>
        <begin position="289"/>
        <end position="303"/>
    </location>
</feature>
<feature type="transmembrane region" description="Helical" evidence="2">
    <location>
        <begin position="304"/>
        <end position="324"/>
    </location>
</feature>
<feature type="topological domain" description="Lumenal" evidence="23">
    <location>
        <begin position="325"/>
        <end position="342"/>
    </location>
</feature>
<feature type="transmembrane region" description="Helical" evidence="2">
    <location>
        <begin position="343"/>
        <end position="363"/>
    </location>
</feature>
<feature type="topological domain" description="Cytoplasmic" evidence="23">
    <location>
        <begin position="364"/>
        <end position="418"/>
    </location>
</feature>
<feature type="transmembrane region" description="Helical" evidence="2">
    <location>
        <begin position="419"/>
        <end position="439"/>
    </location>
</feature>
<feature type="topological domain" description="Lumenal" evidence="23">
    <location>
        <begin position="440"/>
        <end position="448"/>
    </location>
</feature>
<feature type="transmembrane region" description="Helical" evidence="2">
    <location>
        <begin position="449"/>
        <end position="469"/>
    </location>
</feature>
<feature type="topological domain" description="Cytoplasmic" evidence="23">
    <location>
        <begin position="470"/>
        <end position="483"/>
    </location>
</feature>
<feature type="transmembrane region" description="Helical" evidence="2">
    <location>
        <begin position="484"/>
        <end position="504"/>
    </location>
</feature>
<feature type="topological domain" description="Lumenal" evidence="23">
    <location>
        <begin position="505"/>
        <end position="520"/>
    </location>
</feature>
<feature type="transmembrane region" description="Helical" evidence="2">
    <location>
        <begin position="521"/>
        <end position="541"/>
    </location>
</feature>
<feature type="topological domain" description="Cytoplasmic" evidence="23">
    <location>
        <begin position="542"/>
        <end position="592"/>
    </location>
</feature>
<feature type="transmembrane region" description="Helical" evidence="2">
    <location>
        <begin position="593"/>
        <end position="613"/>
    </location>
</feature>
<feature type="topological domain" description="Lumenal" evidence="23">
    <location>
        <begin position="614"/>
        <end position="617"/>
    </location>
</feature>
<feature type="transmembrane region" description="Helical" evidence="2">
    <location>
        <begin position="618"/>
        <end position="638"/>
    </location>
</feature>
<feature type="topological domain" description="Cytoplasmic" evidence="23">
    <location>
        <begin position="639"/>
        <end position="765"/>
    </location>
</feature>
<feature type="region of interest" description="Mediates homodimerization with SLC30A6" evidence="14">
    <location>
        <begin position="420"/>
        <end position="640"/>
    </location>
</feature>
<feature type="region of interest" description="His-rich loop; required for zinc transport" evidence="26">
    <location>
        <begin position="542"/>
        <end position="578"/>
    </location>
</feature>
<feature type="region of interest" description="Disordered" evidence="3">
    <location>
        <begin position="551"/>
        <end position="581"/>
    </location>
</feature>
<feature type="binding site" evidence="27">
    <location>
        <position position="451"/>
    </location>
    <ligand>
        <name>Zn(2+)</name>
        <dbReference type="ChEBI" id="CHEBI:29105"/>
        <note>transported zinc</note>
    </ligand>
</feature>
<feature type="binding site" evidence="1">
    <location>
        <position position="455"/>
    </location>
    <ligand>
        <name>Zn(2+)</name>
        <dbReference type="ChEBI" id="CHEBI:29105"/>
        <note>transported zinc</note>
    </ligand>
</feature>
<feature type="binding site" evidence="1">
    <location>
        <position position="595"/>
    </location>
    <ligand>
        <name>Zn(2+)</name>
        <dbReference type="ChEBI" id="CHEBI:29105"/>
        <note>transported zinc</note>
    </ligand>
</feature>
<feature type="binding site" evidence="1">
    <location>
        <position position="599"/>
    </location>
    <ligand>
        <name>Zn(2+)</name>
        <dbReference type="ChEBI" id="CHEBI:29105"/>
        <note>transported zinc</note>
    </ligand>
</feature>
<feature type="modified residue" description="N-acetylmethionine" evidence="29">
    <location>
        <position position="1"/>
    </location>
</feature>
<feature type="splice variant" id="VSP_030254" description="In isoform 2." evidence="20">
    <location>
        <begin position="1"/>
        <end position="171"/>
    </location>
</feature>
<feature type="splice variant" id="VSP_045115" description="In isoform 4." evidence="21">
    <location>
        <begin position="29"/>
        <end position="69"/>
    </location>
</feature>
<feature type="splice variant" id="VSP_043673" description="In isoform 3 and isoform 4." evidence="21">
    <original>WIKIFKHAVAGCIISLLWFFGLTLCGP</original>
    <variation>IIGSLKIPGRKEFKDKKLNDPRKLVGN</variation>
    <location>
        <begin position="92"/>
        <end position="118"/>
    </location>
</feature>
<feature type="splice variant" id="VSP_043674" description="In isoform 3 and isoform 4." evidence="21">
    <location>
        <begin position="119"/>
        <end position="765"/>
    </location>
</feature>
<feature type="splice variant" id="VSP_030255" description="In isoform 2." evidence="20">
    <original>IQKIEGLISYRDPHFWRHSASIVAGTIH</original>
    <variation>VLYVISSLLSSLKITFLKSLLEVKQTTK</variation>
    <location>
        <begin position="667"/>
        <end position="694"/>
    </location>
</feature>
<feature type="splice variant" id="VSP_030256" description="In isoform 2." evidence="20">
    <location>
        <begin position="695"/>
        <end position="765"/>
    </location>
</feature>
<feature type="mutagenesis site" description="Loss of zinc transporter activity." evidence="12">
    <original>H</original>
    <variation>A</variation>
    <location>
        <position position="451"/>
    </location>
</feature>
<feature type="mutagenesis site" description="No effect on zinc ion transmembrane transporter activity. No effect on zinc ion import into Golgi. Loss of specificity for zinc ions as it can also transport cadmium ions." evidence="16">
    <original>H</original>
    <variation>D</variation>
    <location>
        <position position="451"/>
    </location>
</feature>
<feature type="mutagenesis site" description="Loss of zinc transporter activity. No effect on localization to the trans-Golgi network." evidence="12">
    <original>D</original>
    <variation>A</variation>
    <location>
        <position position="599"/>
    </location>
</feature>
<feature type="mutagenesis site" description="No effect on zinc transporter activity. No effect on localization to the trans-Golgi network." evidence="12">
    <original>D</original>
    <variation>E</variation>
    <location>
        <position position="599"/>
    </location>
</feature>
<feature type="sequence conflict" description="In Ref. 5; BAB14258." evidence="23" ref="5">
    <original>R</original>
    <variation>C</variation>
    <location>
        <position position="303"/>
    </location>
</feature>
<feature type="sequence conflict" description="In Ref. 2; AAL84188." evidence="23" ref="2">
    <original>T</original>
    <variation>A</variation>
    <location>
        <position position="321"/>
    </location>
</feature>
<feature type="sequence conflict" description="In Ref. 2; AAL84188." evidence="23" ref="2">
    <original>L</original>
    <variation>P</variation>
    <location>
        <position position="328"/>
    </location>
</feature>
<feature type="sequence conflict" description="In Ref. 5; BAB14258." evidence="23" ref="5">
    <original>R</original>
    <variation>Q</variation>
    <location>
        <position position="483"/>
    </location>
</feature>
<feature type="sequence conflict" description="In Ref. 4; AAQ88869." evidence="23" ref="4">
    <original>FI</original>
    <variation>ST</variation>
    <location>
        <begin position="628"/>
        <end position="629"/>
    </location>
</feature>
<organism>
    <name type="scientific">Homo sapiens</name>
    <name type="common">Human</name>
    <dbReference type="NCBI Taxonomy" id="9606"/>
    <lineage>
        <taxon>Eukaryota</taxon>
        <taxon>Metazoa</taxon>
        <taxon>Chordata</taxon>
        <taxon>Craniata</taxon>
        <taxon>Vertebrata</taxon>
        <taxon>Euteleostomi</taxon>
        <taxon>Mammalia</taxon>
        <taxon>Eutheria</taxon>
        <taxon>Euarchontoglires</taxon>
        <taxon>Primates</taxon>
        <taxon>Haplorrhini</taxon>
        <taxon>Catarrhini</taxon>
        <taxon>Hominidae</taxon>
        <taxon>Homo</taxon>
    </lineage>
</organism>
<evidence type="ECO:0000250" key="1">
    <source>
        <dbReference type="UniProtKB" id="Q8IWU4"/>
    </source>
</evidence>
<evidence type="ECO:0000255" key="2"/>
<evidence type="ECO:0000256" key="3">
    <source>
        <dbReference type="SAM" id="MobiDB-lite"/>
    </source>
</evidence>
<evidence type="ECO:0000269" key="4">
    <source>
    </source>
</evidence>
<evidence type="ECO:0000269" key="5">
    <source>
    </source>
</evidence>
<evidence type="ECO:0000269" key="6">
    <source>
    </source>
</evidence>
<evidence type="ECO:0000269" key="7">
    <source>
    </source>
</evidence>
<evidence type="ECO:0000269" key="8">
    <source>
    </source>
</evidence>
<evidence type="ECO:0000269" key="9">
    <source>
    </source>
</evidence>
<evidence type="ECO:0000269" key="10">
    <source>
    </source>
</evidence>
<evidence type="ECO:0000269" key="11">
    <source>
    </source>
</evidence>
<evidence type="ECO:0000269" key="12">
    <source>
    </source>
</evidence>
<evidence type="ECO:0000269" key="13">
    <source>
    </source>
</evidence>
<evidence type="ECO:0000269" key="14">
    <source>
    </source>
</evidence>
<evidence type="ECO:0000269" key="15">
    <source>
    </source>
</evidence>
<evidence type="ECO:0000269" key="16">
    <source>
    </source>
</evidence>
<evidence type="ECO:0000269" key="17">
    <source>
    </source>
</evidence>
<evidence type="ECO:0000269" key="18">
    <source>
    </source>
</evidence>
<evidence type="ECO:0000303" key="19">
    <source>
    </source>
</evidence>
<evidence type="ECO:0000303" key="20">
    <source>
    </source>
</evidence>
<evidence type="ECO:0000303" key="21">
    <source>
    </source>
</evidence>
<evidence type="ECO:0000303" key="22">
    <source>
    </source>
</evidence>
<evidence type="ECO:0000305" key="23"/>
<evidence type="ECO:0000305" key="24">
    <source>
    </source>
</evidence>
<evidence type="ECO:0000305" key="25">
    <source>
    </source>
</evidence>
<evidence type="ECO:0000305" key="26">
    <source>
    </source>
</evidence>
<evidence type="ECO:0000305" key="27">
    <source>
    </source>
</evidence>
<evidence type="ECO:0000312" key="28">
    <source>
        <dbReference type="HGNC" id="HGNC:19089"/>
    </source>
</evidence>
<evidence type="ECO:0007744" key="29">
    <source>
    </source>
</evidence>
<proteinExistence type="evidence at protein level"/>
<dbReference type="EMBL" id="AF461760">
    <property type="protein sequence ID" value="AAL96437.1"/>
    <property type="molecule type" value="mRNA"/>
</dbReference>
<dbReference type="EMBL" id="AF439324">
    <property type="protein sequence ID" value="AAL84188.1"/>
    <property type="molecule type" value="mRNA"/>
</dbReference>
<dbReference type="EMBL" id="AY089991">
    <property type="protein sequence ID" value="AAM09099.1"/>
    <property type="molecule type" value="mRNA"/>
</dbReference>
<dbReference type="EMBL" id="AY358505">
    <property type="protein sequence ID" value="AAQ88869.1"/>
    <property type="molecule type" value="mRNA"/>
</dbReference>
<dbReference type="EMBL" id="AK022818">
    <property type="protein sequence ID" value="BAB14258.1"/>
    <property type="status" value="ALT_INIT"/>
    <property type="molecule type" value="mRNA"/>
</dbReference>
<dbReference type="EMBL" id="AK292925">
    <property type="protein sequence ID" value="BAF85614.1"/>
    <property type="molecule type" value="mRNA"/>
</dbReference>
<dbReference type="EMBL" id="BX537394">
    <property type="protein sequence ID" value="CAD97636.1"/>
    <property type="molecule type" value="mRNA"/>
</dbReference>
<dbReference type="EMBL" id="AC010273">
    <property type="status" value="NOT_ANNOTATED_CDS"/>
    <property type="molecule type" value="Genomic_DNA"/>
</dbReference>
<dbReference type="EMBL" id="CH471137">
    <property type="protein sequence ID" value="EAW51307.1"/>
    <property type="molecule type" value="Genomic_DNA"/>
</dbReference>
<dbReference type="EMBL" id="CH471137">
    <property type="protein sequence ID" value="EAW51309.1"/>
    <property type="molecule type" value="Genomic_DNA"/>
</dbReference>
<dbReference type="EMBL" id="BC000808">
    <property type="protein sequence ID" value="AAH00808.1"/>
    <property type="molecule type" value="mRNA"/>
</dbReference>
<dbReference type="EMBL" id="BC008198">
    <property type="protein sequence ID" value="AAH08198.2"/>
    <property type="molecule type" value="mRNA"/>
</dbReference>
<dbReference type="EMBL" id="BC017441">
    <property type="protein sequence ID" value="AAH17441.1"/>
    <property type="molecule type" value="mRNA"/>
</dbReference>
<dbReference type="EMBL" id="BC130452">
    <property type="protein sequence ID" value="AAI30453.1"/>
    <property type="molecule type" value="mRNA"/>
</dbReference>
<dbReference type="EMBL" id="BC130454">
    <property type="protein sequence ID" value="AAI30455.1"/>
    <property type="molecule type" value="mRNA"/>
</dbReference>
<dbReference type="EMBL" id="BC144349">
    <property type="protein sequence ID" value="AAI44350.1"/>
    <property type="molecule type" value="mRNA"/>
</dbReference>
<dbReference type="CCDS" id="CCDS34173.1">
    <molecule id="Q8TAD4-3"/>
</dbReference>
<dbReference type="CCDS" id="CCDS3996.1">
    <molecule id="Q8TAD4-1"/>
</dbReference>
<dbReference type="CCDS" id="CCDS58955.1">
    <molecule id="Q8TAD4-4"/>
</dbReference>
<dbReference type="RefSeq" id="NP_001238898.1">
    <molecule id="Q8TAD4-4"/>
    <property type="nucleotide sequence ID" value="NM_001251969.2"/>
</dbReference>
<dbReference type="RefSeq" id="NP_075053.2">
    <molecule id="Q8TAD4-1"/>
    <property type="nucleotide sequence ID" value="NM_022902.4"/>
</dbReference>
<dbReference type="RefSeq" id="NP_076960.1">
    <molecule id="Q8TAD4-3"/>
    <property type="nucleotide sequence ID" value="NM_024055.5"/>
</dbReference>
<dbReference type="SMR" id="Q8TAD4"/>
<dbReference type="BioGRID" id="122346">
    <property type="interactions" value="145"/>
</dbReference>
<dbReference type="ComplexPortal" id="CPX-8361">
    <property type="entry name" value="ZNT5-ZNT6 proton-coupled zinc antiporter complex"/>
</dbReference>
<dbReference type="FunCoup" id="Q8TAD4">
    <property type="interactions" value="2177"/>
</dbReference>
<dbReference type="IntAct" id="Q8TAD4">
    <property type="interactions" value="64"/>
</dbReference>
<dbReference type="MINT" id="Q8TAD4"/>
<dbReference type="STRING" id="9606.ENSP00000379836"/>
<dbReference type="DrugBank" id="DB14533">
    <property type="generic name" value="Zinc chloride"/>
</dbReference>
<dbReference type="DrugBank" id="DB14548">
    <property type="generic name" value="Zinc sulfate, unspecified form"/>
</dbReference>
<dbReference type="TCDB" id="2.A.4.4.3">
    <property type="family name" value="the cation diffusion facilitator (cdf) family"/>
</dbReference>
<dbReference type="GlyGen" id="Q8TAD4">
    <property type="glycosylation" value="3 sites, 1 O-linked glycan (3 sites)"/>
</dbReference>
<dbReference type="iPTMnet" id="Q8TAD4"/>
<dbReference type="PhosphoSitePlus" id="Q8TAD4"/>
<dbReference type="SwissPalm" id="Q8TAD4"/>
<dbReference type="BioMuta" id="SLC30A5"/>
<dbReference type="DMDM" id="74723898"/>
<dbReference type="jPOST" id="Q8TAD4"/>
<dbReference type="MassIVE" id="Q8TAD4"/>
<dbReference type="PaxDb" id="9606-ENSP00000379836"/>
<dbReference type="PeptideAtlas" id="Q8TAD4"/>
<dbReference type="ProteomicsDB" id="7251"/>
<dbReference type="ProteomicsDB" id="73861">
    <molecule id="Q8TAD4-1"/>
</dbReference>
<dbReference type="ProteomicsDB" id="73862">
    <molecule id="Q8TAD4-2"/>
</dbReference>
<dbReference type="ProteomicsDB" id="73863">
    <molecule id="Q8TAD4-3"/>
</dbReference>
<dbReference type="Pumba" id="Q8TAD4"/>
<dbReference type="Antibodypedia" id="23894">
    <property type="antibodies" value="48 antibodies from 13 providers"/>
</dbReference>
<dbReference type="DNASU" id="64924"/>
<dbReference type="Ensembl" id="ENST00000380860.8">
    <molecule id="Q8TAD4-3"/>
    <property type="protein sequence ID" value="ENSP00000370241.4"/>
    <property type="gene ID" value="ENSG00000145740.20"/>
</dbReference>
<dbReference type="Ensembl" id="ENST00000396591.8">
    <molecule id="Q8TAD4-1"/>
    <property type="protein sequence ID" value="ENSP00000379836.3"/>
    <property type="gene ID" value="ENSG00000145740.20"/>
</dbReference>
<dbReference type="Ensembl" id="ENST00000502979.1">
    <molecule id="Q8TAD4-4"/>
    <property type="protein sequence ID" value="ENSP00000421251.1"/>
    <property type="gene ID" value="ENSG00000145740.20"/>
</dbReference>
<dbReference type="GeneID" id="64924"/>
<dbReference type="KEGG" id="hsa:64924"/>
<dbReference type="MANE-Select" id="ENST00000396591.8">
    <property type="protein sequence ID" value="ENSP00000379836.3"/>
    <property type="RefSeq nucleotide sequence ID" value="NM_022902.5"/>
    <property type="RefSeq protein sequence ID" value="NP_075053.2"/>
</dbReference>
<dbReference type="UCSC" id="uc003jvg.4">
    <molecule id="Q8TAD4-1"/>
    <property type="organism name" value="human"/>
</dbReference>
<dbReference type="AGR" id="HGNC:19089"/>
<dbReference type="CTD" id="64924"/>
<dbReference type="DisGeNET" id="64924"/>
<dbReference type="GeneCards" id="SLC30A5"/>
<dbReference type="HGNC" id="HGNC:19089">
    <property type="gene designation" value="SLC30A5"/>
</dbReference>
<dbReference type="HPA" id="ENSG00000145740">
    <property type="expression patterns" value="Low tissue specificity"/>
</dbReference>
<dbReference type="MalaCards" id="SLC30A5"/>
<dbReference type="MIM" id="607819">
    <property type="type" value="gene"/>
</dbReference>
<dbReference type="neXtProt" id="NX_Q8TAD4"/>
<dbReference type="OpenTargets" id="ENSG00000145740"/>
<dbReference type="PharmGKB" id="PA134865113"/>
<dbReference type="VEuPathDB" id="HostDB:ENSG00000145740"/>
<dbReference type="eggNOG" id="KOG1484">
    <property type="taxonomic scope" value="Eukaryota"/>
</dbReference>
<dbReference type="GeneTree" id="ENSGT00940000155754"/>
<dbReference type="HOGENOM" id="CLU_2072337_0_0_1"/>
<dbReference type="InParanoid" id="Q8TAD4"/>
<dbReference type="OMA" id="NHLFYHF"/>
<dbReference type="OrthoDB" id="78669at2759"/>
<dbReference type="PAN-GO" id="Q8TAD4">
    <property type="GO annotations" value="5 GO annotations based on evolutionary models"/>
</dbReference>
<dbReference type="PhylomeDB" id="Q8TAD4"/>
<dbReference type="TreeFam" id="TF315217"/>
<dbReference type="PathwayCommons" id="Q8TAD4"/>
<dbReference type="Reactome" id="R-HSA-264876">
    <property type="pathway name" value="Insulin processing"/>
</dbReference>
<dbReference type="Reactome" id="R-HSA-435368">
    <property type="pathway name" value="Zinc efflux and compartmentalization by the SLC30 family"/>
</dbReference>
<dbReference type="SignaLink" id="Q8TAD4"/>
<dbReference type="BioGRID-ORCS" id="64924">
    <property type="hits" value="13 hits in 1154 CRISPR screens"/>
</dbReference>
<dbReference type="ChiTaRS" id="SLC30A5">
    <property type="organism name" value="human"/>
</dbReference>
<dbReference type="GenomeRNAi" id="64924"/>
<dbReference type="Pharos" id="Q8TAD4">
    <property type="development level" value="Tbio"/>
</dbReference>
<dbReference type="PRO" id="PR:Q8TAD4"/>
<dbReference type="Proteomes" id="UP000005640">
    <property type="component" value="Chromosome 5"/>
</dbReference>
<dbReference type="RNAct" id="Q8TAD4">
    <property type="molecule type" value="protein"/>
</dbReference>
<dbReference type="Bgee" id="ENSG00000145740">
    <property type="expression patterns" value="Expressed in buccal mucosa cell and 196 other cell types or tissues"/>
</dbReference>
<dbReference type="ExpressionAtlas" id="Q8TAD4">
    <property type="expression patterns" value="baseline and differential"/>
</dbReference>
<dbReference type="GO" id="GO:0016324">
    <property type="term" value="C:apical plasma membrane"/>
    <property type="evidence" value="ECO:0000314"/>
    <property type="project" value="UniProtKB"/>
</dbReference>
<dbReference type="GO" id="GO:0031410">
    <property type="term" value="C:cytoplasmic vesicle"/>
    <property type="evidence" value="ECO:0000318"/>
    <property type="project" value="GO_Central"/>
</dbReference>
<dbReference type="GO" id="GO:0005789">
    <property type="term" value="C:endoplasmic reticulum membrane"/>
    <property type="evidence" value="ECO:0000314"/>
    <property type="project" value="UniProtKB"/>
</dbReference>
<dbReference type="GO" id="GO:0012507">
    <property type="term" value="C:ER to Golgi transport vesicle membrane"/>
    <property type="evidence" value="ECO:0000314"/>
    <property type="project" value="UniProtKB"/>
</dbReference>
<dbReference type="GO" id="GO:0005794">
    <property type="term" value="C:Golgi apparatus"/>
    <property type="evidence" value="ECO:0000314"/>
    <property type="project" value="UniProtKB"/>
</dbReference>
<dbReference type="GO" id="GO:1990674">
    <property type="term" value="C:Golgi cis cisterna membrane"/>
    <property type="evidence" value="ECO:0000314"/>
    <property type="project" value="UniProtKB"/>
</dbReference>
<dbReference type="GO" id="GO:0000139">
    <property type="term" value="C:Golgi membrane"/>
    <property type="evidence" value="ECO:0000314"/>
    <property type="project" value="UniProtKB"/>
</dbReference>
<dbReference type="GO" id="GO:0016020">
    <property type="term" value="C:membrane"/>
    <property type="evidence" value="ECO:0000314"/>
    <property type="project" value="MGI"/>
</dbReference>
<dbReference type="GO" id="GO:0005730">
    <property type="term" value="C:nucleolus"/>
    <property type="evidence" value="ECO:0000314"/>
    <property type="project" value="HPA"/>
</dbReference>
<dbReference type="GO" id="GO:0005654">
    <property type="term" value="C:nucleoplasm"/>
    <property type="evidence" value="ECO:0000314"/>
    <property type="project" value="HPA"/>
</dbReference>
<dbReference type="GO" id="GO:0005886">
    <property type="term" value="C:plasma membrane"/>
    <property type="evidence" value="ECO:0000314"/>
    <property type="project" value="UniProtKB"/>
</dbReference>
<dbReference type="GO" id="GO:0030141">
    <property type="term" value="C:secretory granule"/>
    <property type="evidence" value="ECO:0000314"/>
    <property type="project" value="MGI"/>
</dbReference>
<dbReference type="GO" id="GO:0030667">
    <property type="term" value="C:secretory granule membrane"/>
    <property type="evidence" value="ECO:0000314"/>
    <property type="project" value="UniProtKB"/>
</dbReference>
<dbReference type="GO" id="GO:0032588">
    <property type="term" value="C:trans-Golgi network membrane"/>
    <property type="evidence" value="ECO:0000314"/>
    <property type="project" value="UniProtKB"/>
</dbReference>
<dbReference type="GO" id="GO:0015297">
    <property type="term" value="F:antiporter activity"/>
    <property type="evidence" value="ECO:0007669"/>
    <property type="project" value="UniProtKB-KW"/>
</dbReference>
<dbReference type="GO" id="GO:0046872">
    <property type="term" value="F:metal ion binding"/>
    <property type="evidence" value="ECO:0007669"/>
    <property type="project" value="UniProtKB-KW"/>
</dbReference>
<dbReference type="GO" id="GO:0022883">
    <property type="term" value="F:zinc efflux transmembrane transporter activity"/>
    <property type="evidence" value="ECO:0000314"/>
    <property type="project" value="UniProtKB"/>
</dbReference>
<dbReference type="GO" id="GO:0005385">
    <property type="term" value="F:zinc ion transmembrane transporter activity"/>
    <property type="evidence" value="ECO:0000314"/>
    <property type="project" value="UniProtKB"/>
</dbReference>
<dbReference type="GO" id="GO:0140826">
    <property type="term" value="F:zinc:proton antiporter activity"/>
    <property type="evidence" value="ECO:0000314"/>
    <property type="project" value="UniProtKB"/>
</dbReference>
<dbReference type="GO" id="GO:0006824">
    <property type="term" value="P:cobalt ion transport"/>
    <property type="evidence" value="ECO:0000314"/>
    <property type="project" value="MGI"/>
</dbReference>
<dbReference type="GO" id="GO:0006506">
    <property type="term" value="P:GPI anchor biosynthetic process"/>
    <property type="evidence" value="ECO:0000315"/>
    <property type="project" value="UniProtKB"/>
</dbReference>
<dbReference type="GO" id="GO:0030070">
    <property type="term" value="P:insulin processing"/>
    <property type="evidence" value="ECO:0000304"/>
    <property type="project" value="Reactome"/>
</dbReference>
<dbReference type="GO" id="GO:0006882">
    <property type="term" value="P:intracellular zinc ion homeostasis"/>
    <property type="evidence" value="ECO:0000314"/>
    <property type="project" value="UniProtKB"/>
</dbReference>
<dbReference type="GO" id="GO:0010043">
    <property type="term" value="P:response to zinc ion"/>
    <property type="evidence" value="ECO:0000314"/>
    <property type="project" value="UniProtKB"/>
</dbReference>
<dbReference type="GO" id="GO:0071578">
    <property type="term" value="P:zinc ion import across plasma membrane"/>
    <property type="evidence" value="ECO:0000314"/>
    <property type="project" value="UniProtKB"/>
</dbReference>
<dbReference type="GO" id="GO:1904257">
    <property type="term" value="P:zinc ion import into Golgi lumen"/>
    <property type="evidence" value="ECO:0000314"/>
    <property type="project" value="UniProtKB"/>
</dbReference>
<dbReference type="GO" id="GO:0062111">
    <property type="term" value="P:zinc ion import into organelle"/>
    <property type="evidence" value="ECO:0000314"/>
    <property type="project" value="UniProtKB"/>
</dbReference>
<dbReference type="GO" id="GO:0071577">
    <property type="term" value="P:zinc ion transmembrane transport"/>
    <property type="evidence" value="ECO:0000304"/>
    <property type="project" value="Reactome"/>
</dbReference>
<dbReference type="GO" id="GO:0006829">
    <property type="term" value="P:zinc ion transport"/>
    <property type="evidence" value="ECO:0000314"/>
    <property type="project" value="UniProtKB"/>
</dbReference>
<dbReference type="Gene3D" id="1.20.1510.10">
    <property type="entry name" value="Cation efflux protein transmembrane domain"/>
    <property type="match status" value="1"/>
</dbReference>
<dbReference type="InterPro" id="IPR002524">
    <property type="entry name" value="Cation_efflux"/>
</dbReference>
<dbReference type="InterPro" id="IPR027469">
    <property type="entry name" value="Cation_efflux_TMD_sf"/>
</dbReference>
<dbReference type="InterPro" id="IPR045316">
    <property type="entry name" value="Msc2-like"/>
</dbReference>
<dbReference type="NCBIfam" id="TIGR01297">
    <property type="entry name" value="CDF"/>
    <property type="match status" value="1"/>
</dbReference>
<dbReference type="PANTHER" id="PTHR45755">
    <property type="match status" value="1"/>
</dbReference>
<dbReference type="PANTHER" id="PTHR45755:SF1">
    <property type="entry name" value="PROTON-COUPLED ZINC ANTIPORTER SLC30A5"/>
    <property type="match status" value="1"/>
</dbReference>
<dbReference type="Pfam" id="PF01545">
    <property type="entry name" value="Cation_efflux"/>
    <property type="match status" value="1"/>
</dbReference>
<dbReference type="SUPFAM" id="SSF161111">
    <property type="entry name" value="Cation efflux protein transmembrane domain-like"/>
    <property type="match status" value="1"/>
</dbReference>
<reference key="1">
    <citation type="journal article" date="2002" name="J. Biol. Chem.">
        <title>Cloning and characterization of a novel mammalian zinc transporter, zinc transporter 5, abundantly expressed in pancreatic beta cells.</title>
        <authorList>
            <person name="Kambe T."/>
            <person name="Narita H."/>
            <person name="Yamaguchi-Iwai Y."/>
            <person name="Hirose J."/>
            <person name="Amano T."/>
            <person name="Sugiura N."/>
            <person name="Sasaki R."/>
            <person name="Mori K."/>
            <person name="Iwanaga T."/>
            <person name="Nagao M."/>
        </authorList>
    </citation>
    <scope>NUCLEOTIDE SEQUENCE [MRNA]</scope>
    <scope>FUNCTION</scope>
    <scope>TRANSPORTER ACTIVITY</scope>
    <scope>BIOPHYSICOCHEMICAL PROPERTIES</scope>
    <scope>SUBCELLULAR LOCATION</scope>
    <scope>TISSUE SPECIFICITY</scope>
</reference>
<reference key="2">
    <citation type="journal article" date="2002" name="J. Biol. Chem.">
        <title>A novel zinc-regulated human zinc transporter, hZTL1, is localized to the enterocyte apical membrane.</title>
        <authorList>
            <person name="Cragg R.A."/>
            <person name="Christie G.R."/>
            <person name="Phillips S.R."/>
            <person name="Russi R.M."/>
            <person name="Kuery S."/>
            <person name="Mathers J.C."/>
            <person name="Taylor P.M."/>
            <person name="Ford D."/>
        </authorList>
    </citation>
    <scope>NUCLEOTIDE SEQUENCE [MRNA] (ISOFORM 2)</scope>
    <scope>FUNCTION (ISOFORM 2)</scope>
    <scope>TRANSPORTER ACTIVITY (ISOFORM 2)</scope>
    <scope>SUBCELLULAR LOCATION (ISOFORM 2)</scope>
    <scope>INDUCTION</scope>
    <source>
        <tissue>Small intestine</tissue>
    </source>
</reference>
<reference key="3">
    <citation type="journal article" date="2004" name="Biochem. Pharmacol.">
        <title>Differential regulation of zinc efflux transporters ZnT-1, ZnT-5 and ZnT-7 gene expression by zinc levels: a real-time RT-PCR study.</title>
        <authorList>
            <person name="Devergnas S."/>
            <person name="Chimienti F."/>
            <person name="Naud N."/>
            <person name="Pennequin A."/>
            <person name="Coquerel Y."/>
            <person name="Chantegrel J."/>
            <person name="Favier A."/>
            <person name="Seve M."/>
        </authorList>
    </citation>
    <scope>NUCLEOTIDE SEQUENCE [MRNA] (ISOFORM 1)</scope>
    <scope>INDUCTION</scope>
    <source>
        <tissue>Heart</tissue>
    </source>
</reference>
<reference key="4">
    <citation type="journal article" date="2003" name="Genome Res.">
        <title>The secreted protein discovery initiative (SPDI), a large-scale effort to identify novel human secreted and transmembrane proteins: a bioinformatics assessment.</title>
        <authorList>
            <person name="Clark H.F."/>
            <person name="Gurney A.L."/>
            <person name="Abaya E."/>
            <person name="Baker K."/>
            <person name="Baldwin D.T."/>
            <person name="Brush J."/>
            <person name="Chen J."/>
            <person name="Chow B."/>
            <person name="Chui C."/>
            <person name="Crowley C."/>
            <person name="Currell B."/>
            <person name="Deuel B."/>
            <person name="Dowd P."/>
            <person name="Eaton D."/>
            <person name="Foster J.S."/>
            <person name="Grimaldi C."/>
            <person name="Gu Q."/>
            <person name="Hass P.E."/>
            <person name="Heldens S."/>
            <person name="Huang A."/>
            <person name="Kim H.S."/>
            <person name="Klimowski L."/>
            <person name="Jin Y."/>
            <person name="Johnson S."/>
            <person name="Lee J."/>
            <person name="Lewis L."/>
            <person name="Liao D."/>
            <person name="Mark M.R."/>
            <person name="Robbie E."/>
            <person name="Sanchez C."/>
            <person name="Schoenfeld J."/>
            <person name="Seshagiri S."/>
            <person name="Simmons L."/>
            <person name="Singh J."/>
            <person name="Smith V."/>
            <person name="Stinson J."/>
            <person name="Vagts A."/>
            <person name="Vandlen R.L."/>
            <person name="Watanabe C."/>
            <person name="Wieand D."/>
            <person name="Woods K."/>
            <person name="Xie M.-H."/>
            <person name="Yansura D.G."/>
            <person name="Yi S."/>
            <person name="Yu G."/>
            <person name="Yuan J."/>
            <person name="Zhang M."/>
            <person name="Zhang Z."/>
            <person name="Goddard A.D."/>
            <person name="Wood W.I."/>
            <person name="Godowski P.J."/>
            <person name="Gray A.M."/>
        </authorList>
    </citation>
    <scope>NUCLEOTIDE SEQUENCE [LARGE SCALE MRNA] (ISOFORM 1)</scope>
</reference>
<reference key="5">
    <citation type="journal article" date="2004" name="Nat. Genet.">
        <title>Complete sequencing and characterization of 21,243 full-length human cDNAs.</title>
        <authorList>
            <person name="Ota T."/>
            <person name="Suzuki Y."/>
            <person name="Nishikawa T."/>
            <person name="Otsuki T."/>
            <person name="Sugiyama T."/>
            <person name="Irie R."/>
            <person name="Wakamatsu A."/>
            <person name="Hayashi K."/>
            <person name="Sato H."/>
            <person name="Nagai K."/>
            <person name="Kimura K."/>
            <person name="Makita H."/>
            <person name="Sekine M."/>
            <person name="Obayashi M."/>
            <person name="Nishi T."/>
            <person name="Shibahara T."/>
            <person name="Tanaka T."/>
            <person name="Ishii S."/>
            <person name="Yamamoto J."/>
            <person name="Saito K."/>
            <person name="Kawai Y."/>
            <person name="Isono Y."/>
            <person name="Nakamura Y."/>
            <person name="Nagahari K."/>
            <person name="Murakami K."/>
            <person name="Yasuda T."/>
            <person name="Iwayanagi T."/>
            <person name="Wagatsuma M."/>
            <person name="Shiratori A."/>
            <person name="Sudo H."/>
            <person name="Hosoiri T."/>
            <person name="Kaku Y."/>
            <person name="Kodaira H."/>
            <person name="Kondo H."/>
            <person name="Sugawara M."/>
            <person name="Takahashi M."/>
            <person name="Kanda K."/>
            <person name="Yokoi T."/>
            <person name="Furuya T."/>
            <person name="Kikkawa E."/>
            <person name="Omura Y."/>
            <person name="Abe K."/>
            <person name="Kamihara K."/>
            <person name="Katsuta N."/>
            <person name="Sato K."/>
            <person name="Tanikawa M."/>
            <person name="Yamazaki M."/>
            <person name="Ninomiya K."/>
            <person name="Ishibashi T."/>
            <person name="Yamashita H."/>
            <person name="Murakawa K."/>
            <person name="Fujimori K."/>
            <person name="Tanai H."/>
            <person name="Kimata M."/>
            <person name="Watanabe M."/>
            <person name="Hiraoka S."/>
            <person name="Chiba Y."/>
            <person name="Ishida S."/>
            <person name="Ono Y."/>
            <person name="Takiguchi S."/>
            <person name="Watanabe S."/>
            <person name="Yosida M."/>
            <person name="Hotuta T."/>
            <person name="Kusano J."/>
            <person name="Kanehori K."/>
            <person name="Takahashi-Fujii A."/>
            <person name="Hara H."/>
            <person name="Tanase T.-O."/>
            <person name="Nomura Y."/>
            <person name="Togiya S."/>
            <person name="Komai F."/>
            <person name="Hara R."/>
            <person name="Takeuchi K."/>
            <person name="Arita M."/>
            <person name="Imose N."/>
            <person name="Musashino K."/>
            <person name="Yuuki H."/>
            <person name="Oshima A."/>
            <person name="Sasaki N."/>
            <person name="Aotsuka S."/>
            <person name="Yoshikawa Y."/>
            <person name="Matsunawa H."/>
            <person name="Ichihara T."/>
            <person name="Shiohata N."/>
            <person name="Sano S."/>
            <person name="Moriya S."/>
            <person name="Momiyama H."/>
            <person name="Satoh N."/>
            <person name="Takami S."/>
            <person name="Terashima Y."/>
            <person name="Suzuki O."/>
            <person name="Nakagawa S."/>
            <person name="Senoh A."/>
            <person name="Mizoguchi H."/>
            <person name="Goto Y."/>
            <person name="Shimizu F."/>
            <person name="Wakebe H."/>
            <person name="Hishigaki H."/>
            <person name="Watanabe T."/>
            <person name="Sugiyama A."/>
            <person name="Takemoto M."/>
            <person name="Kawakami B."/>
            <person name="Yamazaki M."/>
            <person name="Watanabe K."/>
            <person name="Kumagai A."/>
            <person name="Itakura S."/>
            <person name="Fukuzumi Y."/>
            <person name="Fujimori Y."/>
            <person name="Komiyama M."/>
            <person name="Tashiro H."/>
            <person name="Tanigami A."/>
            <person name="Fujiwara T."/>
            <person name="Ono T."/>
            <person name="Yamada K."/>
            <person name="Fujii Y."/>
            <person name="Ozaki K."/>
            <person name="Hirao M."/>
            <person name="Ohmori Y."/>
            <person name="Kawabata A."/>
            <person name="Hikiji T."/>
            <person name="Kobatake N."/>
            <person name="Inagaki H."/>
            <person name="Ikema Y."/>
            <person name="Okamoto S."/>
            <person name="Okitani R."/>
            <person name="Kawakami T."/>
            <person name="Noguchi S."/>
            <person name="Itoh T."/>
            <person name="Shigeta K."/>
            <person name="Senba T."/>
            <person name="Matsumura K."/>
            <person name="Nakajima Y."/>
            <person name="Mizuno T."/>
            <person name="Morinaga M."/>
            <person name="Sasaki M."/>
            <person name="Togashi T."/>
            <person name="Oyama M."/>
            <person name="Hata H."/>
            <person name="Watanabe M."/>
            <person name="Komatsu T."/>
            <person name="Mizushima-Sugano J."/>
            <person name="Satoh T."/>
            <person name="Shirai Y."/>
            <person name="Takahashi Y."/>
            <person name="Nakagawa K."/>
            <person name="Okumura K."/>
            <person name="Nagase T."/>
            <person name="Nomura N."/>
            <person name="Kikuchi H."/>
            <person name="Masuho Y."/>
            <person name="Yamashita R."/>
            <person name="Nakai K."/>
            <person name="Yada T."/>
            <person name="Nakamura Y."/>
            <person name="Ohara O."/>
            <person name="Isogai T."/>
            <person name="Sugano S."/>
        </authorList>
    </citation>
    <scope>NUCLEOTIDE SEQUENCE [LARGE SCALE MRNA] (ISOFORM 1)</scope>
    <source>
        <tissue>Teratocarcinoma</tissue>
        <tissue>Trachea</tissue>
    </source>
</reference>
<reference key="6">
    <citation type="journal article" date="2007" name="BMC Genomics">
        <title>The full-ORF clone resource of the German cDNA consortium.</title>
        <authorList>
            <person name="Bechtel S."/>
            <person name="Rosenfelder H."/>
            <person name="Duda A."/>
            <person name="Schmidt C.P."/>
            <person name="Ernst U."/>
            <person name="Wellenreuther R."/>
            <person name="Mehrle A."/>
            <person name="Schuster C."/>
            <person name="Bahr A."/>
            <person name="Bloecker H."/>
            <person name="Heubner D."/>
            <person name="Hoerlein A."/>
            <person name="Michel G."/>
            <person name="Wedler H."/>
            <person name="Koehrer K."/>
            <person name="Ottenwaelder B."/>
            <person name="Poustka A."/>
            <person name="Wiemann S."/>
            <person name="Schupp I."/>
        </authorList>
    </citation>
    <scope>NUCLEOTIDE SEQUENCE [LARGE SCALE MRNA] (ISOFORM 1)</scope>
    <source>
        <tissue>Colon endothelium</tissue>
    </source>
</reference>
<reference key="7">
    <citation type="journal article" date="2004" name="Nature">
        <title>The DNA sequence and comparative analysis of human chromosome 5.</title>
        <authorList>
            <person name="Schmutz J."/>
            <person name="Martin J."/>
            <person name="Terry A."/>
            <person name="Couronne O."/>
            <person name="Grimwood J."/>
            <person name="Lowry S."/>
            <person name="Gordon L.A."/>
            <person name="Scott D."/>
            <person name="Xie G."/>
            <person name="Huang W."/>
            <person name="Hellsten U."/>
            <person name="Tran-Gyamfi M."/>
            <person name="She X."/>
            <person name="Prabhakar S."/>
            <person name="Aerts A."/>
            <person name="Altherr M."/>
            <person name="Bajorek E."/>
            <person name="Black S."/>
            <person name="Branscomb E."/>
            <person name="Caoile C."/>
            <person name="Challacombe J.F."/>
            <person name="Chan Y.M."/>
            <person name="Denys M."/>
            <person name="Detter J.C."/>
            <person name="Escobar J."/>
            <person name="Flowers D."/>
            <person name="Fotopulos D."/>
            <person name="Glavina T."/>
            <person name="Gomez M."/>
            <person name="Gonzales E."/>
            <person name="Goodstein D."/>
            <person name="Grigoriev I."/>
            <person name="Groza M."/>
            <person name="Hammon N."/>
            <person name="Hawkins T."/>
            <person name="Haydu L."/>
            <person name="Israni S."/>
            <person name="Jett J."/>
            <person name="Kadner K."/>
            <person name="Kimball H."/>
            <person name="Kobayashi A."/>
            <person name="Lopez F."/>
            <person name="Lou Y."/>
            <person name="Martinez D."/>
            <person name="Medina C."/>
            <person name="Morgan J."/>
            <person name="Nandkeshwar R."/>
            <person name="Noonan J.P."/>
            <person name="Pitluck S."/>
            <person name="Pollard M."/>
            <person name="Predki P."/>
            <person name="Priest J."/>
            <person name="Ramirez L."/>
            <person name="Retterer J."/>
            <person name="Rodriguez A."/>
            <person name="Rogers S."/>
            <person name="Salamov A."/>
            <person name="Salazar A."/>
            <person name="Thayer N."/>
            <person name="Tice H."/>
            <person name="Tsai M."/>
            <person name="Ustaszewska A."/>
            <person name="Vo N."/>
            <person name="Wheeler J."/>
            <person name="Wu K."/>
            <person name="Yang J."/>
            <person name="Dickson M."/>
            <person name="Cheng J.-F."/>
            <person name="Eichler E.E."/>
            <person name="Olsen A."/>
            <person name="Pennacchio L.A."/>
            <person name="Rokhsar D.S."/>
            <person name="Richardson P."/>
            <person name="Lucas S.M."/>
            <person name="Myers R.M."/>
            <person name="Rubin E.M."/>
        </authorList>
    </citation>
    <scope>NUCLEOTIDE SEQUENCE [LARGE SCALE GENOMIC DNA]</scope>
</reference>
<reference key="8">
    <citation type="submission" date="2005-09" db="EMBL/GenBank/DDBJ databases">
        <authorList>
            <person name="Mural R.J."/>
            <person name="Istrail S."/>
            <person name="Sutton G.G."/>
            <person name="Florea L."/>
            <person name="Halpern A.L."/>
            <person name="Mobarry C.M."/>
            <person name="Lippert R."/>
            <person name="Walenz B."/>
            <person name="Shatkay H."/>
            <person name="Dew I."/>
            <person name="Miller J.R."/>
            <person name="Flanigan M.J."/>
            <person name="Edwards N.J."/>
            <person name="Bolanos R."/>
            <person name="Fasulo D."/>
            <person name="Halldorsson B.V."/>
            <person name="Hannenhalli S."/>
            <person name="Turner R."/>
            <person name="Yooseph S."/>
            <person name="Lu F."/>
            <person name="Nusskern D.R."/>
            <person name="Shue B.C."/>
            <person name="Zheng X.H."/>
            <person name="Zhong F."/>
            <person name="Delcher A.L."/>
            <person name="Huson D.H."/>
            <person name="Kravitz S.A."/>
            <person name="Mouchard L."/>
            <person name="Reinert K."/>
            <person name="Remington K.A."/>
            <person name="Clark A.G."/>
            <person name="Waterman M.S."/>
            <person name="Eichler E.E."/>
            <person name="Adams M.D."/>
            <person name="Hunkapiller M.W."/>
            <person name="Myers E.W."/>
            <person name="Venter J.C."/>
        </authorList>
    </citation>
    <scope>NUCLEOTIDE SEQUENCE [LARGE SCALE GENOMIC DNA]</scope>
</reference>
<reference key="9">
    <citation type="journal article" date="2004" name="Genome Res.">
        <title>The status, quality, and expansion of the NIH full-length cDNA project: the Mammalian Gene Collection (MGC).</title>
        <authorList>
            <consortium name="The MGC Project Team"/>
        </authorList>
    </citation>
    <scope>NUCLEOTIDE SEQUENCE [LARGE SCALE MRNA] (ISOFORMS 3 AND 4)</scope>
    <scope>NUCLEOTIDE SEQUENCE [LARGE SCALE MRNA] OF 104-765 (ISOFORM 1)</scope>
    <source>
        <tissue>Brain</tissue>
        <tissue>Placenta</tissue>
        <tissue>Uterus</tissue>
    </source>
</reference>
<reference key="10">
    <citation type="journal article" date="2002" name="Hum. Mol. Genet.">
        <title>Osteopenia and male-specific sudden cardiac death in mice lacking a zinc transporter gene, Znt5.</title>
        <authorList>
            <person name="Inoue K."/>
            <person name="Matsuda K."/>
            <person name="Itoh M."/>
            <person name="Kawaguchi H."/>
            <person name="Tomoike H."/>
            <person name="Aoyagi T."/>
            <person name="Nagai R."/>
            <person name="Hori M."/>
            <person name="Nakamura Y."/>
            <person name="Tanaka T."/>
        </authorList>
    </citation>
    <scope>SUBCELLULAR LOCATION</scope>
    <scope>TISSUE SPECIFICITY</scope>
</reference>
<reference key="11">
    <citation type="journal article" date="2005" name="J. Biol. Chem.">
        <title>Zinc transporters, ZnT5 and ZnT7, are required for the activation of alkaline phosphatases, zinc-requiring enzymes that are glycosylphosphatidylinositol-anchored to the cytoplasmic membrane.</title>
        <authorList>
            <person name="Suzuki T."/>
            <person name="Ishihara K."/>
            <person name="Migaki H."/>
            <person name="Matsuura W."/>
            <person name="Kohda A."/>
            <person name="Okumura K."/>
            <person name="Nagao M."/>
            <person name="Yamaguchi-Iwai Y."/>
            <person name="Kambe T."/>
        </authorList>
    </citation>
    <scope>FUNCTION</scope>
    <scope>SUBCELLULAR LOCATION</scope>
</reference>
<reference key="12">
    <citation type="journal article" date="2005" name="J. Biol. Chem.">
        <title>Two different zinc transport complexes of cation diffusion facilitator proteins localized in the secretory pathway operate to activate alkaline phosphatases in vertebrate cells.</title>
        <authorList>
            <person name="Suzuki T."/>
            <person name="Ishihara K."/>
            <person name="Migaki H."/>
            <person name="Ishihara K."/>
            <person name="Nagao M."/>
            <person name="Yamaguchi-Iwai Y."/>
            <person name="Kambe T."/>
        </authorList>
    </citation>
    <scope>FUNCTION</scope>
    <scope>SUBUNIT</scope>
    <scope>REGION</scope>
</reference>
<reference key="13">
    <citation type="journal article" date="2006" name="J. Biol. Chem.">
        <title>Zinc transport complexes contribute to the homeostatic maintenance of secretory pathway function in vertebrate cells.</title>
        <authorList>
            <person name="Ishihara K."/>
            <person name="Yamazaki T."/>
            <person name="Ishida Y."/>
            <person name="Suzuki T."/>
            <person name="Oda K."/>
            <person name="Nagao M."/>
            <person name="Yamaguchi-Iwai Y."/>
            <person name="Kambe T."/>
        </authorList>
    </citation>
    <scope>FUNCTION</scope>
    <scope>INDUCTION</scope>
</reference>
<reference key="14">
    <citation type="journal article" date="2007" name="J. Biol. Chem.">
        <title>ZnT5 variant B is a bidirectional zinc transporter and mediates zinc uptake in human intestinal Caco-2 cells.</title>
        <authorList>
            <person name="Valentine R.A."/>
            <person name="Jackson K.A."/>
            <person name="Christie G.R."/>
            <person name="Mathers J.C."/>
            <person name="Taylor P.M."/>
            <person name="Ford D."/>
        </authorList>
    </citation>
    <scope>FUNCTION (ISOFORM 2)</scope>
    <scope>SUBCELLULAR LOCATION (ISOFORM 2)</scope>
</reference>
<reference key="15">
    <citation type="journal article" date="2008" name="Mol. Cell">
        <title>Kinase-selective enrichment enables quantitative phosphoproteomics of the kinome across the cell cycle.</title>
        <authorList>
            <person name="Daub H."/>
            <person name="Olsen J.V."/>
            <person name="Bairlein M."/>
            <person name="Gnad F."/>
            <person name="Oppermann F.S."/>
            <person name="Korner R."/>
            <person name="Greff Z."/>
            <person name="Keri G."/>
            <person name="Stemmann O."/>
            <person name="Mann M."/>
        </authorList>
    </citation>
    <scope>IDENTIFICATION BY MASS SPECTROMETRY [LARGE SCALE ANALYSIS]</scope>
    <source>
        <tissue>Cervix carcinoma</tissue>
    </source>
</reference>
<reference key="16">
    <citation type="journal article" date="2009" name="J. Biol. Chem.">
        <title>Identification of the Zn2+ binding site and mode of operation of a mammalian Zn2+ transporter.</title>
        <authorList>
            <person name="Ohana E."/>
            <person name="Hoch E."/>
            <person name="Keasar C."/>
            <person name="Kambe T."/>
            <person name="Yifrach O."/>
            <person name="Hershfinkel M."/>
            <person name="Sekler I."/>
        </authorList>
    </citation>
    <scope>FUNCTION</scope>
    <scope>TRANSPORTER ACTIVITY</scope>
    <scope>SUBCELLULAR LOCATION</scope>
    <scope>MUTAGENESIS OF HIS-451 AND ASP-599</scope>
</reference>
<reference key="17">
    <citation type="journal article" date="2009" name="J. Biol. Chem.">
        <title>Demonstration and characterization of the heterodimerization of ZnT5 and ZnT6 in the early secretory pathway.</title>
        <authorList>
            <person name="Fukunaka A."/>
            <person name="Suzuki T."/>
            <person name="Kurokawa Y."/>
            <person name="Yamazaki T."/>
            <person name="Fujiwara N."/>
            <person name="Ishihara K."/>
            <person name="Migaki H."/>
            <person name="Okumura K."/>
            <person name="Masuda S."/>
            <person name="Yamaguchi-Iwai Y."/>
            <person name="Nagao M."/>
            <person name="Kambe T."/>
        </authorList>
    </citation>
    <scope>SUBUNIT</scope>
    <scope>REGION</scope>
</reference>
<reference key="18">
    <citation type="journal article" date="2009" name="PLoS ONE">
        <title>SLC30A3 (ZnT3) oligomerization by dityrosine bonds regulates its subcellular localization and metal transport capacity.</title>
        <authorList>
            <person name="Salazar G."/>
            <person name="Falcon-Perez J.M."/>
            <person name="Harrison R."/>
            <person name="Faundez V."/>
        </authorList>
    </citation>
    <scope>DITYROSINE BOND</scope>
</reference>
<reference key="19">
    <citation type="journal article" date="2010" name="Sci. Signal.">
        <title>Quantitative phosphoproteomics reveals widespread full phosphorylation site occupancy during mitosis.</title>
        <authorList>
            <person name="Olsen J.V."/>
            <person name="Vermeulen M."/>
            <person name="Santamaria A."/>
            <person name="Kumar C."/>
            <person name="Miller M.L."/>
            <person name="Jensen L.J."/>
            <person name="Gnad F."/>
            <person name="Cox J."/>
            <person name="Jensen T.S."/>
            <person name="Nigg E.A."/>
            <person name="Brunak S."/>
            <person name="Mann M."/>
        </authorList>
    </citation>
    <scope>IDENTIFICATION BY MASS SPECTROMETRY [LARGE SCALE ANALYSIS]</scope>
    <source>
        <tissue>Cervix carcinoma</tissue>
    </source>
</reference>
<reference key="20">
    <citation type="journal article" date="2011" name="PLoS ONE">
        <title>Differential subcellular localization of the splice variants of the zinc transporter ZnT5 is dictated by the different C-terminal regions.</title>
        <authorList>
            <person name="Thornton J.K."/>
            <person name="Taylor K.M."/>
            <person name="Ford D."/>
            <person name="Valentine R.A."/>
        </authorList>
    </citation>
    <scope>ALTERNATIVE SPLICING (ISOFORMS 1 AND 2)</scope>
    <scope>SUBCELLULAR LOCATION (ISOFORMS 1 AND 2)</scope>
</reference>
<reference key="21">
    <citation type="journal article" date="2012" name="Proc. Natl. Acad. Sci. U.S.A.">
        <title>Histidine pairing at the metal transport site of mammalian ZnT transporters controls Zn2+ over Cd2+ selectivity.</title>
        <authorList>
            <person name="Hoch E."/>
            <person name="Lin W."/>
            <person name="Chai J."/>
            <person name="Hershfinkel M."/>
            <person name="Fu D."/>
            <person name="Sekler I."/>
        </authorList>
    </citation>
    <scope>FUNCTION</scope>
    <scope>TRANSPORTER ACTIVITY</scope>
    <scope>SUBCELLULAR LOCATION</scope>
    <scope>MUTAGENESIS OF HIS-451</scope>
    <scope>ZINC BINDING</scope>
</reference>
<reference key="22">
    <citation type="journal article" date="2012" name="Proc. Natl. Acad. Sci. U.S.A.">
        <title>N-terminal acetylome analyses and functional insights of the N-terminal acetyltransferase NatB.</title>
        <authorList>
            <person name="Van Damme P."/>
            <person name="Lasa M."/>
            <person name="Polevoda B."/>
            <person name="Gazquez C."/>
            <person name="Elosegui-Artola A."/>
            <person name="Kim D.S."/>
            <person name="De Juan-Pardo E."/>
            <person name="Demeyer K."/>
            <person name="Hole K."/>
            <person name="Larrea E."/>
            <person name="Timmerman E."/>
            <person name="Prieto J."/>
            <person name="Arnesen T."/>
            <person name="Sherman F."/>
            <person name="Gevaert K."/>
            <person name="Aldabe R."/>
        </authorList>
    </citation>
    <scope>ACETYLATION [LARGE SCALE ANALYSIS] AT MET-1</scope>
    <scope>IDENTIFICATION BY MASS SPECTROMETRY [LARGE SCALE ANALYSIS]</scope>
</reference>
<reference key="23">
    <citation type="journal article" date="2015" name="Mol. Cell. Biol.">
        <title>The zinc finger protein ZNF658 regulates the transcription of genes involved in zinc homeostasis and affects ribosome biogenesis through the zinc transcriptional regulatory element.</title>
        <authorList>
            <person name="Ogo O.A."/>
            <person name="Tyson J."/>
            <person name="Cockell S.J."/>
            <person name="Howard A."/>
            <person name="Valentine R.A."/>
            <person name="Ford D."/>
        </authorList>
    </citation>
    <scope>INDUCTION</scope>
</reference>
<reference key="24">
    <citation type="journal article" date="2022" name="J. Biol. Chem.">
        <title>Zinc transport via ZNT5-6 and ZNT7 is critical for cell surface glycosylphosphatidylinositol-anchored protein expression.</title>
        <authorList>
            <person name="Wagatsuma T."/>
            <person name="Shimotsuma K."/>
            <person name="Sogo A."/>
            <person name="Sato R."/>
            <person name="Kubo N."/>
            <person name="Ueda S."/>
            <person name="Uchida Y."/>
            <person name="Kinoshita M."/>
            <person name="Kambe T."/>
        </authorList>
    </citation>
    <scope>FUNCTION</scope>
</reference>
<keyword id="KW-0007">Acetylation</keyword>
<keyword id="KW-0025">Alternative splicing</keyword>
<keyword id="KW-0050">Antiport</keyword>
<keyword id="KW-1003">Cell membrane</keyword>
<keyword id="KW-0968">Cytoplasmic vesicle</keyword>
<keyword id="KW-0256">Endoplasmic reticulum</keyword>
<keyword id="KW-0333">Golgi apparatus</keyword>
<keyword id="KW-0406">Ion transport</keyword>
<keyword id="KW-0472">Membrane</keyword>
<keyword id="KW-0479">Metal-binding</keyword>
<keyword id="KW-1267">Proteomics identification</keyword>
<keyword id="KW-1185">Reference proteome</keyword>
<keyword id="KW-0812">Transmembrane</keyword>
<keyword id="KW-1133">Transmembrane helix</keyword>
<keyword id="KW-0813">Transport</keyword>
<keyword id="KW-0862">Zinc</keyword>
<keyword id="KW-0864">Zinc transport</keyword>
<accession>Q8TAD4</accession>
<accession>B7ZM89</accession>
<accession>Q6UX54</accession>
<accession>Q7L4M4</accession>
<accession>Q8TDG3</accession>
<accession>Q9BVY8</accession>
<accession>Q9H9H1</accession>
<comment type="function">
    <text evidence="4 8 9 10 12 16 18">Together with SLC30A6 forms a functional proton-coupled zinc ion antiporter mediating zinc entry into the lumen of organelles along the secretory pathway (PubMed:11904301, PubMed:15525635, PubMed:15994300, PubMed:19366695, PubMed:22529353). By contributing to zinc ion homeostasis within the early secretory pathway, regulates the activation and folding of enzymes like alkaline phosphatases and enzymes involved in phosphatidylinositol glycan anchor biosynthesis (PubMed:15525635, PubMed:15994300, PubMed:16636052, PubMed:35525268). Through the transport of zinc into secretory granules of pancreatic beta-cells, plays an important role in the storage and secretion of insulin (PubMed:11904301).</text>
</comment>
<comment type="function">
    <molecule>Isoform 2</molecule>
    <text evidence="5 11">Zinc ion:proton antiporter mediating influx and efflux of zinc at the plasma membrane.</text>
</comment>
<comment type="catalytic activity">
    <reaction evidence="12 16 24">
        <text>Zn(2+)(in) + 2 H(+)(out) = Zn(2+)(out) + 2 H(+)(in)</text>
        <dbReference type="Rhea" id="RHEA:72627"/>
        <dbReference type="ChEBI" id="CHEBI:15378"/>
        <dbReference type="ChEBI" id="CHEBI:29105"/>
    </reaction>
</comment>
<comment type="catalytic activity">
    <molecule>Isoform 2</molecule>
    <reaction evidence="25">
        <text>Zn(2+)(in) + 2 H(+)(out) = Zn(2+)(out) + 2 H(+)(in)</text>
        <dbReference type="Rhea" id="RHEA:72627"/>
        <dbReference type="ChEBI" id="CHEBI:15378"/>
        <dbReference type="ChEBI" id="CHEBI:29105"/>
    </reaction>
</comment>
<comment type="biophysicochemical properties">
    <kinetics>
        <KM evidence="4">0.25 uM for Zn(2+)</KM>
        <Vmax evidence="4">15.0 nmol/min/mg enzyme for the transport of Zn(2+)</Vmax>
    </kinetics>
</comment>
<comment type="subunit">
    <text evidence="9 14">Heterodimer with SLC30A6/ZNT6; form a functional zinc ion transmembrane transporter.</text>
</comment>
<comment type="interaction">
    <interactant intactId="EBI-11337878">
        <id>Q8TAD4</id>
    </interactant>
    <interactant intactId="EBI-2849005">
        <id>Q6NXT4</id>
        <label>SLC30A6</label>
    </interactant>
    <organismsDiffer>false</organismsDiffer>
    <experiments>14</experiments>
</comment>
<comment type="subcellular location">
    <subcellularLocation>
        <location evidence="4 6 8 15 16">Golgi apparatus</location>
        <location evidence="4 6 8 15 16">Golgi stack membrane</location>
        <topology evidence="2">Multi-pass membrane protein</topology>
    </subcellularLocation>
    <subcellularLocation>
        <location evidence="8">Cytoplasmic vesicle</location>
        <location evidence="8">COPII-coated vesicle membrane</location>
        <topology evidence="2">Multi-pass membrane protein</topology>
    </subcellularLocation>
    <subcellularLocation>
        <location evidence="4">Cytoplasmic vesicle</location>
        <location evidence="4">Secretory vesicle membrane</location>
        <topology evidence="2">Multi-pass membrane protein</topology>
    </subcellularLocation>
    <subcellularLocation>
        <location evidence="12">Golgi apparatus</location>
        <location evidence="12">trans-Golgi network membrane</location>
        <topology evidence="2">Multi-pass membrane protein</topology>
    </subcellularLocation>
    <text evidence="4 8">Enriched in early compartments of the secretory pathway including COPII-coated vesicles and the Golgi cis cisterna.</text>
</comment>
<comment type="subcellular location">
    <molecule>Isoform 2</molecule>
    <subcellularLocation>
        <location evidence="15">Endoplasmic reticulum membrane</location>
        <topology evidence="2">Multi-pass membrane protein</topology>
    </subcellularLocation>
    <subcellularLocation>
        <location evidence="5 11">Cell membrane</location>
        <topology evidence="2">Multi-pass membrane protein</topology>
    </subcellularLocation>
    <subcellularLocation>
        <location evidence="5">Apical cell membrane</location>
        <topology evidence="2">Multi-pass membrane protein</topology>
    </subcellularLocation>
</comment>
<comment type="alternative products">
    <event type="alternative splicing"/>
    <isoform>
        <id>Q8TAD4-1</id>
        <name>1</name>
        <name evidence="22">ZnT5A</name>
        <sequence type="displayed"/>
    </isoform>
    <isoform>
        <id>Q8TAD4-2</id>
        <name>2</name>
        <name evidence="22">ZnT5B</name>
        <sequence type="described" ref="VSP_030254 VSP_030255 VSP_030256"/>
    </isoform>
    <isoform>
        <id>Q8TAD4-3</id>
        <name>3</name>
        <sequence type="described" ref="VSP_043673 VSP_043674"/>
    </isoform>
    <isoform>
        <id>Q8TAD4-4</id>
        <name>4</name>
        <sequence type="described" ref="VSP_045115 VSP_043673 VSP_043674"/>
    </isoform>
</comment>
<comment type="tissue specificity">
    <text evidence="4 6">Ubiquitously expressed (PubMed:11904301, PubMed:12095919). Highly expressed in pancreas, liver and kidney (PubMed:11904301). Expressed abundantly in insulin-containing beta cells, undetectable in other endocrine cell types including glucagon-secreting alpha cells and most acinar cells (at protein level) (PubMed:11904301).</text>
</comment>
<comment type="induction">
    <text evidence="5 7 10 17">Expression is regulated by zinc (PubMed:11937503, PubMed:15276077, PubMed:25582195). Up-regulated by endoplasmic reticulum stress (PubMed:16636052).</text>
</comment>
<comment type="PTM">
    <text evidence="13">Could homodimerize through the formation of dityrosine bonds upon oxidative stress.</text>
</comment>
<comment type="similarity">
    <text evidence="23">Belongs to the cation diffusion facilitator (CDF) transporter (TC 2.A.4) family. SLC30A subfamily.</text>
</comment>
<comment type="sequence caution" evidence="23">
    <conflict type="erroneous initiation">
        <sequence resource="EMBL-CDS" id="BAB14258"/>
    </conflict>
    <text>Truncated N-terminus.</text>
</comment>